<proteinExistence type="inferred from homology"/>
<reference key="1">
    <citation type="submission" date="2007-02" db="EMBL/GenBank/DDBJ databases">
        <title>Complete sequence of chromosome of Yersinia pestis Pestoides F.</title>
        <authorList>
            <consortium name="US DOE Joint Genome Institute"/>
            <person name="Copeland A."/>
            <person name="Lucas S."/>
            <person name="Lapidus A."/>
            <person name="Barry K."/>
            <person name="Detter J.C."/>
            <person name="Glavina del Rio T."/>
            <person name="Hammon N."/>
            <person name="Israni S."/>
            <person name="Dalin E."/>
            <person name="Tice H."/>
            <person name="Pitluck S."/>
            <person name="Di Bartolo G."/>
            <person name="Chain P."/>
            <person name="Malfatti S."/>
            <person name="Shin M."/>
            <person name="Vergez L."/>
            <person name="Schmutz J."/>
            <person name="Larimer F."/>
            <person name="Land M."/>
            <person name="Hauser L."/>
            <person name="Worsham P."/>
            <person name="Chu M."/>
            <person name="Bearden S."/>
            <person name="Garcia E."/>
            <person name="Richardson P."/>
        </authorList>
    </citation>
    <scope>NUCLEOTIDE SEQUENCE [LARGE SCALE GENOMIC DNA]</scope>
    <source>
        <strain>Pestoides F</strain>
    </source>
</reference>
<accession>A4TKN8</accession>
<protein>
    <recommendedName>
        <fullName evidence="1">NAD-dependent malic enzyme</fullName>
        <shortName evidence="1">NAD-ME</shortName>
        <ecNumber evidence="1">1.1.1.38</ecNumber>
    </recommendedName>
</protein>
<feature type="chain" id="PRO_1000069556" description="NAD-dependent malic enzyme">
    <location>
        <begin position="1"/>
        <end position="565"/>
    </location>
</feature>
<feature type="active site" description="Proton donor" evidence="1">
    <location>
        <position position="104"/>
    </location>
</feature>
<feature type="active site" description="Proton acceptor" evidence="1">
    <location>
        <position position="175"/>
    </location>
</feature>
<feature type="binding site" evidence="1">
    <location>
        <position position="157"/>
    </location>
    <ligand>
        <name>NAD(+)</name>
        <dbReference type="ChEBI" id="CHEBI:57540"/>
    </ligand>
</feature>
<feature type="binding site" evidence="1">
    <location>
        <position position="246"/>
    </location>
    <ligand>
        <name>a divalent metal cation</name>
        <dbReference type="ChEBI" id="CHEBI:60240"/>
    </ligand>
</feature>
<feature type="binding site" evidence="1">
    <location>
        <position position="247"/>
    </location>
    <ligand>
        <name>a divalent metal cation</name>
        <dbReference type="ChEBI" id="CHEBI:60240"/>
    </ligand>
</feature>
<feature type="binding site" evidence="1">
    <location>
        <position position="270"/>
    </location>
    <ligand>
        <name>a divalent metal cation</name>
        <dbReference type="ChEBI" id="CHEBI:60240"/>
    </ligand>
</feature>
<feature type="binding site" evidence="1">
    <location>
        <position position="270"/>
    </location>
    <ligand>
        <name>NAD(+)</name>
        <dbReference type="ChEBI" id="CHEBI:57540"/>
    </ligand>
</feature>
<feature type="binding site" evidence="1">
    <location>
        <position position="418"/>
    </location>
    <ligand>
        <name>NAD(+)</name>
        <dbReference type="ChEBI" id="CHEBI:57540"/>
    </ligand>
</feature>
<feature type="site" description="Important for activity" evidence="1">
    <location>
        <position position="270"/>
    </location>
</feature>
<comment type="catalytic activity">
    <reaction evidence="1">
        <text>(S)-malate + NAD(+) = pyruvate + CO2 + NADH</text>
        <dbReference type="Rhea" id="RHEA:12653"/>
        <dbReference type="ChEBI" id="CHEBI:15361"/>
        <dbReference type="ChEBI" id="CHEBI:15589"/>
        <dbReference type="ChEBI" id="CHEBI:16526"/>
        <dbReference type="ChEBI" id="CHEBI:57540"/>
        <dbReference type="ChEBI" id="CHEBI:57945"/>
        <dbReference type="EC" id="1.1.1.38"/>
    </reaction>
</comment>
<comment type="catalytic activity">
    <reaction evidence="1">
        <text>oxaloacetate + H(+) = pyruvate + CO2</text>
        <dbReference type="Rhea" id="RHEA:15641"/>
        <dbReference type="ChEBI" id="CHEBI:15361"/>
        <dbReference type="ChEBI" id="CHEBI:15378"/>
        <dbReference type="ChEBI" id="CHEBI:16452"/>
        <dbReference type="ChEBI" id="CHEBI:16526"/>
        <dbReference type="EC" id="1.1.1.38"/>
    </reaction>
</comment>
<comment type="cofactor">
    <cofactor evidence="1">
        <name>Mg(2+)</name>
        <dbReference type="ChEBI" id="CHEBI:18420"/>
    </cofactor>
    <cofactor evidence="1">
        <name>Mn(2+)</name>
        <dbReference type="ChEBI" id="CHEBI:29035"/>
    </cofactor>
    <text evidence="1">Divalent metal cations. Prefers magnesium or manganese.</text>
</comment>
<comment type="subunit">
    <text evidence="1">Homotetramer.</text>
</comment>
<comment type="similarity">
    <text evidence="1">Belongs to the malic enzymes family.</text>
</comment>
<keyword id="KW-0479">Metal-binding</keyword>
<keyword id="KW-0520">NAD</keyword>
<keyword id="KW-0560">Oxidoreductase</keyword>
<dbReference type="EC" id="1.1.1.38" evidence="1"/>
<dbReference type="EMBL" id="CP000668">
    <property type="protein sequence ID" value="ABP39850.1"/>
    <property type="molecule type" value="Genomic_DNA"/>
</dbReference>
<dbReference type="RefSeq" id="WP_002211968.1">
    <property type="nucleotide sequence ID" value="NZ_CP009715.1"/>
</dbReference>
<dbReference type="SMR" id="A4TKN8"/>
<dbReference type="KEGG" id="ypp:YPDSF_1463"/>
<dbReference type="PATRIC" id="fig|386656.14.peg.2319"/>
<dbReference type="GO" id="GO:0005829">
    <property type="term" value="C:cytosol"/>
    <property type="evidence" value="ECO:0007669"/>
    <property type="project" value="TreeGrafter"/>
</dbReference>
<dbReference type="GO" id="GO:0004471">
    <property type="term" value="F:malate dehydrogenase (decarboxylating) (NAD+) activity"/>
    <property type="evidence" value="ECO:0007669"/>
    <property type="project" value="UniProtKB-UniRule"/>
</dbReference>
<dbReference type="GO" id="GO:0046872">
    <property type="term" value="F:metal ion binding"/>
    <property type="evidence" value="ECO:0007669"/>
    <property type="project" value="UniProtKB-KW"/>
</dbReference>
<dbReference type="GO" id="GO:0051287">
    <property type="term" value="F:NAD binding"/>
    <property type="evidence" value="ECO:0007669"/>
    <property type="project" value="InterPro"/>
</dbReference>
<dbReference type="GO" id="GO:0008948">
    <property type="term" value="F:oxaloacetate decarboxylase activity"/>
    <property type="evidence" value="ECO:0007669"/>
    <property type="project" value="UniProtKB-UniRule"/>
</dbReference>
<dbReference type="GO" id="GO:0006108">
    <property type="term" value="P:malate metabolic process"/>
    <property type="evidence" value="ECO:0007669"/>
    <property type="project" value="TreeGrafter"/>
</dbReference>
<dbReference type="CDD" id="cd05312">
    <property type="entry name" value="NAD_bind_1_malic_enz"/>
    <property type="match status" value="1"/>
</dbReference>
<dbReference type="FunFam" id="3.40.50.10380:FF:000001">
    <property type="entry name" value="NAD-dependent malic enzyme"/>
    <property type="match status" value="1"/>
</dbReference>
<dbReference type="FunFam" id="3.40.50.720:FF:000055">
    <property type="entry name" value="NAD-dependent malic enzyme"/>
    <property type="match status" value="1"/>
</dbReference>
<dbReference type="Gene3D" id="3.40.50.10380">
    <property type="entry name" value="Malic enzyme, N-terminal domain"/>
    <property type="match status" value="1"/>
</dbReference>
<dbReference type="Gene3D" id="3.40.50.720">
    <property type="entry name" value="NAD(P)-binding Rossmann-like Domain"/>
    <property type="match status" value="1"/>
</dbReference>
<dbReference type="HAMAP" id="MF_01619">
    <property type="entry name" value="NAD_malic_enz"/>
    <property type="match status" value="1"/>
</dbReference>
<dbReference type="InterPro" id="IPR046346">
    <property type="entry name" value="Aminoacid_DH-like_N_sf"/>
</dbReference>
<dbReference type="InterPro" id="IPR015884">
    <property type="entry name" value="Malic_enzyme_CS"/>
</dbReference>
<dbReference type="InterPro" id="IPR012301">
    <property type="entry name" value="Malic_N_dom"/>
</dbReference>
<dbReference type="InterPro" id="IPR037062">
    <property type="entry name" value="Malic_N_dom_sf"/>
</dbReference>
<dbReference type="InterPro" id="IPR012302">
    <property type="entry name" value="Malic_NAD-bd"/>
</dbReference>
<dbReference type="InterPro" id="IPR001891">
    <property type="entry name" value="Malic_OxRdtase"/>
</dbReference>
<dbReference type="InterPro" id="IPR036291">
    <property type="entry name" value="NAD(P)-bd_dom_sf"/>
</dbReference>
<dbReference type="InterPro" id="IPR023667">
    <property type="entry name" value="NAD_malic_enz_proteobac"/>
</dbReference>
<dbReference type="NCBIfam" id="NF010052">
    <property type="entry name" value="PRK13529.1"/>
    <property type="match status" value="1"/>
</dbReference>
<dbReference type="PANTHER" id="PTHR23406">
    <property type="entry name" value="MALIC ENZYME-RELATED"/>
    <property type="match status" value="1"/>
</dbReference>
<dbReference type="PANTHER" id="PTHR23406:SF34">
    <property type="entry name" value="NAD-DEPENDENT MALIC ENZYME, MITOCHONDRIAL"/>
    <property type="match status" value="1"/>
</dbReference>
<dbReference type="Pfam" id="PF00390">
    <property type="entry name" value="malic"/>
    <property type="match status" value="1"/>
</dbReference>
<dbReference type="Pfam" id="PF03949">
    <property type="entry name" value="Malic_M"/>
    <property type="match status" value="1"/>
</dbReference>
<dbReference type="PIRSF" id="PIRSF000106">
    <property type="entry name" value="ME"/>
    <property type="match status" value="1"/>
</dbReference>
<dbReference type="PRINTS" id="PR00072">
    <property type="entry name" value="MALOXRDTASE"/>
</dbReference>
<dbReference type="SMART" id="SM01274">
    <property type="entry name" value="malic"/>
    <property type="match status" value="1"/>
</dbReference>
<dbReference type="SMART" id="SM00919">
    <property type="entry name" value="Malic_M"/>
    <property type="match status" value="1"/>
</dbReference>
<dbReference type="SUPFAM" id="SSF53223">
    <property type="entry name" value="Aminoacid dehydrogenase-like, N-terminal domain"/>
    <property type="match status" value="1"/>
</dbReference>
<dbReference type="SUPFAM" id="SSF51735">
    <property type="entry name" value="NAD(P)-binding Rossmann-fold domains"/>
    <property type="match status" value="1"/>
</dbReference>
<dbReference type="PROSITE" id="PS00331">
    <property type="entry name" value="MALIC_ENZYMES"/>
    <property type="match status" value="1"/>
</dbReference>
<organism>
    <name type="scientific">Yersinia pestis (strain Pestoides F)</name>
    <dbReference type="NCBI Taxonomy" id="386656"/>
    <lineage>
        <taxon>Bacteria</taxon>
        <taxon>Pseudomonadati</taxon>
        <taxon>Pseudomonadota</taxon>
        <taxon>Gammaproteobacteria</taxon>
        <taxon>Enterobacterales</taxon>
        <taxon>Yersiniaceae</taxon>
        <taxon>Yersinia</taxon>
    </lineage>
</organism>
<sequence length="565" mass="62828">MELEYESKRPLYIPYAGPILLEFPLLNKGSAFTNDERNHFNLHGLLPEAVETIEEQAERAYRQYQDFKNDDDKHIYLRNIQDTNETLFYRLLEAHLSEMMPIIYTPTVGEACEHFSDIYRRARGLFISYPNREHIDDMLQNATKQNVKVIVVTDGERILGLGDQGIGGMGIPIGKLSLYTACGGISPAYTLPVVLDVGTNNPQRLNDPLYMGWRHPRISGDEYYAFVDEFIQAVKRRWPNVLLQFEDFAQKNATPLLNRYRDELCCFNDDIQGTAAVTLGSLIAASHAAGSQLRDQTVTFLGAGSAGCGIAEQIIAQMMSEGLSEIQARARIFMVDRFGLLTDKLPNLLDFQSKLVQKSDDLHHWNLHNDAISLLDVVRNAKPTVLIGVSGQPGLFTEELIREMHSHCARPIVMPLSNPTSRVEARPEDIINWTDGAALVATGSPFPPVSYKEKLYPIAQCNNSYIFPGIGLGVLASGASRVTDGMLMAASRALAESSPLARHGEGALLPNIDDIQAVSKAIAMRVGQAAQLQGVAIVTSEEALSKAIEHNYWQPQYRSYKRTSF</sequence>
<gene>
    <name evidence="1" type="primary">maeA</name>
    <name type="ordered locus">YPDSF_1463</name>
</gene>
<name>MAO1_YERPP</name>
<evidence type="ECO:0000255" key="1">
    <source>
        <dbReference type="HAMAP-Rule" id="MF_01619"/>
    </source>
</evidence>